<organism>
    <name type="scientific">Staphylococcus haemolyticus (strain JCSC1435)</name>
    <dbReference type="NCBI Taxonomy" id="279808"/>
    <lineage>
        <taxon>Bacteria</taxon>
        <taxon>Bacillati</taxon>
        <taxon>Bacillota</taxon>
        <taxon>Bacilli</taxon>
        <taxon>Bacillales</taxon>
        <taxon>Staphylococcaceae</taxon>
        <taxon>Staphylococcus</taxon>
    </lineage>
</organism>
<name>Y1217_STAHJ</name>
<keyword id="KW-0378">Hydrolase</keyword>
<keyword id="KW-0464">Manganese</keyword>
<keyword id="KW-0479">Metal-binding</keyword>
<reference key="1">
    <citation type="journal article" date="2005" name="J. Bacteriol.">
        <title>Whole-genome sequencing of Staphylococcus haemolyticus uncovers the extreme plasticity of its genome and the evolution of human-colonizing staphylococcal species.</title>
        <authorList>
            <person name="Takeuchi F."/>
            <person name="Watanabe S."/>
            <person name="Baba T."/>
            <person name="Yuzawa H."/>
            <person name="Ito T."/>
            <person name="Morimoto Y."/>
            <person name="Kuroda M."/>
            <person name="Cui L."/>
            <person name="Takahashi M."/>
            <person name="Ankai A."/>
            <person name="Baba S."/>
            <person name="Fukui S."/>
            <person name="Lee J.C."/>
            <person name="Hiramatsu K."/>
        </authorList>
    </citation>
    <scope>NUCLEOTIDE SEQUENCE [LARGE SCALE GENOMIC DNA]</scope>
    <source>
        <strain>JCSC1435</strain>
    </source>
</reference>
<gene>
    <name type="ordered locus">SH1217</name>
</gene>
<feature type="chain" id="PRO_0000299430" description="Uncharacterized peptidase SH1217">
    <location>
        <begin position="1"/>
        <end position="351"/>
    </location>
</feature>
<feature type="binding site" evidence="1">
    <location>
        <position position="215"/>
    </location>
    <ligand>
        <name>Mn(2+)</name>
        <dbReference type="ChEBI" id="CHEBI:29035"/>
        <label>2</label>
    </ligand>
</feature>
<feature type="binding site" evidence="1">
    <location>
        <position position="226"/>
    </location>
    <ligand>
        <name>Mn(2+)</name>
        <dbReference type="ChEBI" id="CHEBI:29035"/>
        <label>1</label>
    </ligand>
</feature>
<feature type="binding site" evidence="1">
    <location>
        <position position="226"/>
    </location>
    <ligand>
        <name>Mn(2+)</name>
        <dbReference type="ChEBI" id="CHEBI:29035"/>
        <label>2</label>
    </ligand>
</feature>
<feature type="binding site" evidence="1">
    <location>
        <position position="290"/>
    </location>
    <ligand>
        <name>Mn(2+)</name>
        <dbReference type="ChEBI" id="CHEBI:29035"/>
        <label>1</label>
    </ligand>
</feature>
<feature type="binding site" evidence="1">
    <location>
        <position position="319"/>
    </location>
    <ligand>
        <name>Mn(2+)</name>
        <dbReference type="ChEBI" id="CHEBI:29035"/>
        <label>1</label>
    </ligand>
</feature>
<feature type="binding site" evidence="1">
    <location>
        <position position="333"/>
    </location>
    <ligand>
        <name>Mn(2+)</name>
        <dbReference type="ChEBI" id="CHEBI:29035"/>
        <label>1</label>
    </ligand>
</feature>
<feature type="binding site" evidence="1">
    <location>
        <position position="333"/>
    </location>
    <ligand>
        <name>Mn(2+)</name>
        <dbReference type="ChEBI" id="CHEBI:29035"/>
        <label>2</label>
    </ligand>
</feature>
<accession>Q4L749</accession>
<proteinExistence type="inferred from homology"/>
<dbReference type="EC" id="3.4.-.-"/>
<dbReference type="EMBL" id="AP006716">
    <property type="protein sequence ID" value="BAE04526.1"/>
    <property type="molecule type" value="Genomic_DNA"/>
</dbReference>
<dbReference type="RefSeq" id="WP_011275516.1">
    <property type="nucleotide sequence ID" value="NC_007168.1"/>
</dbReference>
<dbReference type="SMR" id="Q4L749"/>
<dbReference type="KEGG" id="sha:SH1217"/>
<dbReference type="eggNOG" id="COG0006">
    <property type="taxonomic scope" value="Bacteria"/>
</dbReference>
<dbReference type="HOGENOM" id="CLU_017266_4_2_9"/>
<dbReference type="OrthoDB" id="9806388at2"/>
<dbReference type="Proteomes" id="UP000000543">
    <property type="component" value="Chromosome"/>
</dbReference>
<dbReference type="GO" id="GO:0016787">
    <property type="term" value="F:hydrolase activity"/>
    <property type="evidence" value="ECO:0007669"/>
    <property type="project" value="UniProtKB-KW"/>
</dbReference>
<dbReference type="GO" id="GO:0046872">
    <property type="term" value="F:metal ion binding"/>
    <property type="evidence" value="ECO:0007669"/>
    <property type="project" value="UniProtKB-KW"/>
</dbReference>
<dbReference type="CDD" id="cd01092">
    <property type="entry name" value="APP-like"/>
    <property type="match status" value="1"/>
</dbReference>
<dbReference type="FunFam" id="3.90.230.10:FF:000014">
    <property type="entry name" value="Aminopeptidase P family protein"/>
    <property type="match status" value="1"/>
</dbReference>
<dbReference type="Gene3D" id="3.90.230.10">
    <property type="entry name" value="Creatinase/methionine aminopeptidase superfamily"/>
    <property type="match status" value="1"/>
</dbReference>
<dbReference type="Gene3D" id="3.40.350.10">
    <property type="entry name" value="Creatinase/prolidase N-terminal domain"/>
    <property type="match status" value="1"/>
</dbReference>
<dbReference type="InterPro" id="IPR029149">
    <property type="entry name" value="Creatin/AminoP/Spt16_N"/>
</dbReference>
<dbReference type="InterPro" id="IPR036005">
    <property type="entry name" value="Creatinase/aminopeptidase-like"/>
</dbReference>
<dbReference type="InterPro" id="IPR000587">
    <property type="entry name" value="Creatinase_N"/>
</dbReference>
<dbReference type="InterPro" id="IPR000994">
    <property type="entry name" value="Pept_M24"/>
</dbReference>
<dbReference type="InterPro" id="IPR050659">
    <property type="entry name" value="Peptidase_M24B"/>
</dbReference>
<dbReference type="InterPro" id="IPR001131">
    <property type="entry name" value="Peptidase_M24B_aminopep-P_CS"/>
</dbReference>
<dbReference type="PANTHER" id="PTHR46112">
    <property type="entry name" value="AMINOPEPTIDASE"/>
    <property type="match status" value="1"/>
</dbReference>
<dbReference type="PANTHER" id="PTHR46112:SF10">
    <property type="entry name" value="DIPEPTIDASE YKVY-RELATED"/>
    <property type="match status" value="1"/>
</dbReference>
<dbReference type="Pfam" id="PF01321">
    <property type="entry name" value="Creatinase_N"/>
    <property type="match status" value="1"/>
</dbReference>
<dbReference type="Pfam" id="PF00557">
    <property type="entry name" value="Peptidase_M24"/>
    <property type="match status" value="1"/>
</dbReference>
<dbReference type="SUPFAM" id="SSF55920">
    <property type="entry name" value="Creatinase/aminopeptidase"/>
    <property type="match status" value="1"/>
</dbReference>
<dbReference type="SUPFAM" id="SSF53092">
    <property type="entry name" value="Creatinase/prolidase N-terminal domain"/>
    <property type="match status" value="1"/>
</dbReference>
<dbReference type="PROSITE" id="PS00491">
    <property type="entry name" value="PROLINE_PEPTIDASE"/>
    <property type="match status" value="1"/>
</dbReference>
<protein>
    <recommendedName>
        <fullName>Uncharacterized peptidase SH1217</fullName>
        <ecNumber>3.4.-.-</ecNumber>
    </recommendedName>
</protein>
<sequence length="351" mass="39777">MSKIEKITKQLQHEQADAAWITTPLNVFYFTGYRSEPHERLFALLITANGDQTLYCPKMEVEEVKNSPFEGKIIGYLDTENPFEIDPLSFNKLLIESEHLTVKRQRELTQNFGVQHYGDIDQTIKELRNIKNESEIENIREAAKLADKCIEIGTEFLKVGVTEREVVNHIENEIKKFGVSEMSFDTMVLFGDHAASPHGTPGERKLVKDEYVLFDLGVIYNHYCSDMTRTVKFGTPSEEAQTIYNIVLEAETNAIEAIRAGVPLQDIDKIARDIISDAGYGDYFPHRLGHGLGLEEHEYQDVSSTNSNLLEAGMVITIEPGIYVPNVAGVRIEDDILVTENGYEILTHYDK</sequence>
<evidence type="ECO:0000255" key="1"/>
<evidence type="ECO:0000305" key="2"/>
<comment type="cofactor">
    <cofactor evidence="2">
        <name>Mn(2+)</name>
        <dbReference type="ChEBI" id="CHEBI:29035"/>
    </cofactor>
    <text evidence="2">Binds 2 manganese ions per subunit.</text>
</comment>
<comment type="similarity">
    <text evidence="2">Belongs to the peptidase M24B family.</text>
</comment>